<name>MNTP_BACAA</name>
<evidence type="ECO:0000255" key="1">
    <source>
        <dbReference type="HAMAP-Rule" id="MF_01521"/>
    </source>
</evidence>
<dbReference type="EMBL" id="CP001598">
    <property type="protein sequence ID" value="ACQ47602.1"/>
    <property type="molecule type" value="Genomic_DNA"/>
</dbReference>
<dbReference type="RefSeq" id="WP_000142467.1">
    <property type="nucleotide sequence ID" value="NC_012659.1"/>
</dbReference>
<dbReference type="GeneID" id="45025154"/>
<dbReference type="KEGG" id="bai:BAA_5594"/>
<dbReference type="HOGENOM" id="CLU_096410_1_0_9"/>
<dbReference type="GO" id="GO:0005886">
    <property type="term" value="C:plasma membrane"/>
    <property type="evidence" value="ECO:0007669"/>
    <property type="project" value="UniProtKB-SubCell"/>
</dbReference>
<dbReference type="GO" id="GO:0005384">
    <property type="term" value="F:manganese ion transmembrane transporter activity"/>
    <property type="evidence" value="ECO:0007669"/>
    <property type="project" value="UniProtKB-UniRule"/>
</dbReference>
<dbReference type="HAMAP" id="MF_01521">
    <property type="entry name" value="MntP_pump"/>
    <property type="match status" value="1"/>
</dbReference>
<dbReference type="InterPro" id="IPR003810">
    <property type="entry name" value="Mntp/YtaF"/>
</dbReference>
<dbReference type="InterPro" id="IPR022929">
    <property type="entry name" value="Put_MntP"/>
</dbReference>
<dbReference type="PANTHER" id="PTHR35529">
    <property type="entry name" value="MANGANESE EFFLUX PUMP MNTP-RELATED"/>
    <property type="match status" value="1"/>
</dbReference>
<dbReference type="PANTHER" id="PTHR35529:SF1">
    <property type="entry name" value="MANGANESE EFFLUX PUMP MNTP-RELATED"/>
    <property type="match status" value="1"/>
</dbReference>
<dbReference type="Pfam" id="PF02659">
    <property type="entry name" value="Mntp"/>
    <property type="match status" value="1"/>
</dbReference>
<comment type="function">
    <text evidence="1">Probably functions as a manganese efflux pump.</text>
</comment>
<comment type="subcellular location">
    <subcellularLocation>
        <location evidence="1">Cell membrane</location>
        <topology evidence="1">Multi-pass membrane protein</topology>
    </subcellularLocation>
</comment>
<comment type="similarity">
    <text evidence="1">Belongs to the MntP (TC 9.B.29) family.</text>
</comment>
<organism>
    <name type="scientific">Bacillus anthracis (strain A0248)</name>
    <dbReference type="NCBI Taxonomy" id="592021"/>
    <lineage>
        <taxon>Bacteria</taxon>
        <taxon>Bacillati</taxon>
        <taxon>Bacillota</taxon>
        <taxon>Bacilli</taxon>
        <taxon>Bacillales</taxon>
        <taxon>Bacillaceae</taxon>
        <taxon>Bacillus</taxon>
        <taxon>Bacillus cereus group</taxon>
    </lineage>
</organism>
<accession>C3P286</accession>
<protein>
    <recommendedName>
        <fullName evidence="1">Putative manganese efflux pump MntP</fullName>
    </recommendedName>
</protein>
<keyword id="KW-1003">Cell membrane</keyword>
<keyword id="KW-0406">Ion transport</keyword>
<keyword id="KW-0464">Manganese</keyword>
<keyword id="KW-0472">Membrane</keyword>
<keyword id="KW-0812">Transmembrane</keyword>
<keyword id="KW-1133">Transmembrane helix</keyword>
<keyword id="KW-0813">Transport</keyword>
<sequence>MTFEQLIPLIIMAFALGMDAFSVSLGMGMMALKIRQILYIGVTIGIFHIIMPFIGMVLGRFLSEQYGDIAHFAGAILLIGLGFYIVYSSILENEETRTAPIGISLFVFAFGVSIDSFSVGLSLGIYGAQTIITILLFGFVSMLLAWIGLLIGRHAKGMLGTYGEIVGGIILVGFGLYLLFPI</sequence>
<proteinExistence type="inferred from homology"/>
<reference key="1">
    <citation type="submission" date="2009-04" db="EMBL/GenBank/DDBJ databases">
        <title>Genome sequence of Bacillus anthracis A0248.</title>
        <authorList>
            <person name="Dodson R.J."/>
            <person name="Munk A.C."/>
            <person name="Bruce D."/>
            <person name="Detter C."/>
            <person name="Tapia R."/>
            <person name="Sutton G."/>
            <person name="Sims D."/>
            <person name="Brettin T."/>
        </authorList>
    </citation>
    <scope>NUCLEOTIDE SEQUENCE [LARGE SCALE GENOMIC DNA]</scope>
    <source>
        <strain>A0248</strain>
    </source>
</reference>
<gene>
    <name evidence="1" type="primary">mntP</name>
    <name type="ordered locus">BAA_5594</name>
</gene>
<feature type="chain" id="PRO_1000185100" description="Putative manganese efflux pump MntP">
    <location>
        <begin position="1"/>
        <end position="182"/>
    </location>
</feature>
<feature type="transmembrane region" description="Helical" evidence="1">
    <location>
        <begin position="6"/>
        <end position="26"/>
    </location>
</feature>
<feature type="transmembrane region" description="Helical" evidence="1">
    <location>
        <begin position="37"/>
        <end position="57"/>
    </location>
</feature>
<feature type="transmembrane region" description="Helical" evidence="1">
    <location>
        <begin position="71"/>
        <end position="91"/>
    </location>
</feature>
<feature type="transmembrane region" description="Helical" evidence="1">
    <location>
        <begin position="101"/>
        <end position="121"/>
    </location>
</feature>
<feature type="transmembrane region" description="Helical" evidence="1">
    <location>
        <begin position="131"/>
        <end position="151"/>
    </location>
</feature>
<feature type="transmembrane region" description="Helical" evidence="1">
    <location>
        <begin position="162"/>
        <end position="182"/>
    </location>
</feature>